<sequence length="461" mass="50882">MAPDRLGPEGTARPNSSGISVIVVGLGIAGLTAAIECHRKGHSVIAFERMKDVEPFGEFGFESPYWLLRQPSKGDSIIIGSNGGRIFGKWGRGEVRNAMQAWRYTPTHADIYDTAGRFMAQSEIPKAADDMYFTLRGRLAKTFYEHAQSLGIDMRMGSKVTEFWEDSNRAGIVVEGERFEADCVICADGIHSKSRSLFTSLNAQPFRSGFSIFRGKADANAIIADPDAKWILDQTENTDQFKVFLGKEICVVIITCGLGRAVVCSAMHRDLNEAEQSWSTHANPDDLLDAIKDWPCRRQIEPIVRKISEDQFIDYPLLTVSPLDTWVSQHGRMILIGDAAHPFFPTSGQGGAQAMEDAAVLAICLELAGKGNIPLALHATEKIRKSRASVLQLNRTYSEGVQLAPALPKSKDSMSVPNVPVMDWIWHHCCQSYAYDEFDKVAEAIQSGSEYIPHNLPEDGT</sequence>
<keyword id="KW-0274">FAD</keyword>
<keyword id="KW-0285">Flavoprotein</keyword>
<keyword id="KW-0503">Monooxygenase</keyword>
<keyword id="KW-0560">Oxidoreductase</keyword>
<organism>
    <name type="scientific">Hypoxylon pulicicidum</name>
    <dbReference type="NCBI Taxonomy" id="1243767"/>
    <lineage>
        <taxon>Eukaryota</taxon>
        <taxon>Fungi</taxon>
        <taxon>Dikarya</taxon>
        <taxon>Ascomycota</taxon>
        <taxon>Pezizomycotina</taxon>
        <taxon>Sordariomycetes</taxon>
        <taxon>Xylariomycetidae</taxon>
        <taxon>Xylariales</taxon>
        <taxon>Hypoxylaceae</taxon>
        <taxon>Hypoxylon</taxon>
    </lineage>
</organism>
<feature type="chain" id="PRO_0000446566" description="FAD-dependent monooxygenase nodY2">
    <location>
        <begin position="1"/>
        <end position="461"/>
    </location>
</feature>
<feature type="active site" evidence="3">
    <location>
        <position position="214"/>
    </location>
</feature>
<feature type="binding site" evidence="2">
    <location>
        <position position="48"/>
    </location>
    <ligand>
        <name>FAD</name>
        <dbReference type="ChEBI" id="CHEBI:57692"/>
    </ligand>
</feature>
<feature type="binding site" evidence="2">
    <location>
        <position position="136"/>
    </location>
    <ligand>
        <name>FAD</name>
        <dbReference type="ChEBI" id="CHEBI:57692"/>
    </ligand>
</feature>
<feature type="binding site" evidence="2">
    <location>
        <position position="338"/>
    </location>
    <ligand>
        <name>FAD</name>
        <dbReference type="ChEBI" id="CHEBI:57692"/>
    </ligand>
</feature>
<feature type="binding site" evidence="2">
    <location>
        <position position="351"/>
    </location>
    <ligand>
        <name>FAD</name>
        <dbReference type="ChEBI" id="CHEBI:57692"/>
    </ligand>
</feature>
<reference key="1">
    <citation type="journal article" date="2018" name="J. Am. Chem. Soc.">
        <title>Heterologous biosynthesis of nodulisporic acid F.</title>
        <authorList>
            <person name="Van de Bittner K.C."/>
            <person name="Nicholson M.J."/>
            <person name="Bustamante L.Y."/>
            <person name="Kessans S.A."/>
            <person name="Ram A."/>
            <person name="van Dolleweerd C.J."/>
            <person name="Scott B."/>
            <person name="Parker E.J."/>
        </authorList>
    </citation>
    <scope>NUCLEOTIDE SEQUENCE [GENOMIC DNA]</scope>
    <scope>IDENTIFICATION</scope>
    <scope>FUNCTION</scope>
    <scope>PATHWAY</scope>
    <source>
        <strain>MF5954 / ATCC 74245</strain>
    </source>
</reference>
<name>NODY2_HYPPI</name>
<dbReference type="EC" id="1.-.-.-" evidence="7"/>
<dbReference type="EMBL" id="MG182145">
    <property type="protein sequence ID" value="AUM60057.1"/>
    <property type="molecule type" value="Genomic_DNA"/>
</dbReference>
<dbReference type="SMR" id="A0A2I6PIZ8"/>
<dbReference type="GO" id="GO:0071949">
    <property type="term" value="F:FAD binding"/>
    <property type="evidence" value="ECO:0007669"/>
    <property type="project" value="InterPro"/>
</dbReference>
<dbReference type="GO" id="GO:0004497">
    <property type="term" value="F:monooxygenase activity"/>
    <property type="evidence" value="ECO:0007669"/>
    <property type="project" value="UniProtKB-KW"/>
</dbReference>
<dbReference type="Gene3D" id="3.50.50.60">
    <property type="entry name" value="FAD/NAD(P)-binding domain"/>
    <property type="match status" value="1"/>
</dbReference>
<dbReference type="InterPro" id="IPR002938">
    <property type="entry name" value="FAD-bd"/>
</dbReference>
<dbReference type="InterPro" id="IPR050493">
    <property type="entry name" value="FAD-dep_Monooxygenase_BioMet"/>
</dbReference>
<dbReference type="InterPro" id="IPR003953">
    <property type="entry name" value="FAD-dep_OxRdtase_2_FAD-bd"/>
</dbReference>
<dbReference type="InterPro" id="IPR036188">
    <property type="entry name" value="FAD/NAD-bd_sf"/>
</dbReference>
<dbReference type="PANTHER" id="PTHR13789">
    <property type="entry name" value="MONOOXYGENASE"/>
    <property type="match status" value="1"/>
</dbReference>
<dbReference type="PANTHER" id="PTHR13789:SF236">
    <property type="entry name" value="MONOOXYGENASE, PUTATIVE (AFU_ORTHOLOGUE AFUA_6G12060)-RELATED"/>
    <property type="match status" value="1"/>
</dbReference>
<dbReference type="Pfam" id="PF00890">
    <property type="entry name" value="FAD_binding_2"/>
    <property type="match status" value="1"/>
</dbReference>
<dbReference type="Pfam" id="PF01494">
    <property type="entry name" value="FAD_binding_3"/>
    <property type="match status" value="1"/>
</dbReference>
<dbReference type="PRINTS" id="PR00420">
    <property type="entry name" value="RNGMNOXGNASE"/>
</dbReference>
<dbReference type="SUPFAM" id="SSF51905">
    <property type="entry name" value="FAD/NAD(P)-binding domain"/>
    <property type="match status" value="1"/>
</dbReference>
<protein>
    <recommendedName>
        <fullName evidence="5">FAD-dependent monooxygenase nodY2</fullName>
        <ecNumber evidence="7">1.-.-.-</ecNumber>
    </recommendedName>
    <alternativeName>
        <fullName evidence="5">Nodulisporic acid biosynthesis cluster protein Y2</fullName>
    </alternativeName>
</protein>
<proteinExistence type="inferred from homology"/>
<accession>A0A2I6PIZ8</accession>
<evidence type="ECO:0000250" key="1">
    <source>
        <dbReference type="UniProtKB" id="A6T923"/>
    </source>
</evidence>
<evidence type="ECO:0000250" key="2">
    <source>
        <dbReference type="UniProtKB" id="B8M9J8"/>
    </source>
</evidence>
<evidence type="ECO:0000250" key="3">
    <source>
        <dbReference type="UniProtKB" id="L0E4H0"/>
    </source>
</evidence>
<evidence type="ECO:0000269" key="4">
    <source>
    </source>
</evidence>
<evidence type="ECO:0000303" key="5">
    <source>
    </source>
</evidence>
<evidence type="ECO:0000305" key="6"/>
<evidence type="ECO:0000305" key="7">
    <source>
    </source>
</evidence>
<comment type="function">
    <text evidence="4 7">FAD-dependent monooxygenase; part of the gene cluster that mediates the biosynthesis of the indole diterpenes nodulisporic acids (NA). Nodulisporic acid A (NAA) and its chemically modified derivatives are of particular significance because of their highly potent insecticidal activity against blood-feeding arthropods and lack of observable adverse effects on mammals, in particular the tremogenicity associated with the paspaline-derived IDTs is not observed (PubMed:29283570). The geranylgeranyl diphosphate (GGPP) synthase ggs1, localized outside of the cluster, is proposed to catalyze the first step in nodulisporic acid biosynthesis via conversion of farnesyl pyrophosphate and isopentyl pyrophosphate into geranylgeranyl pyrophosphate (GGPP) (PubMed:29283570). Condensation of indole-3-glycerol phosphate with GGPP by the prenyl transferase nodC then forms 3-geranylgeranylindole (3-GGI) (PubMed:29283570). Epoxidation by the FAD-dependent monooxygenase nodM leads to a single-epoxidized-GGI that is substrate of the terpene cyclase nodB for cyclization to yield emindole SB (PubMed:29283570). The terminal methyl carbon, C28, of emindole SB is then oxidized by the cytochrome P450 monooxygenase nodW to produce nodulisporic acid F (NAF), the pentacyclic core of NAA (PubMed:29283570). NAF is converted to nodulisporic acid E (NAE) via prenylation. This step is probably performed by one of the indole diterpene prenyltransferases nodD1 or nodD2 (Probable). Several oxidation steps performed by the FAD-linked oxidoreductase nodO and one of the cytochrome P450 monooxygenase nodR, nodX or nodZ further convert NAE to nodulisporic acid D (NAD) (Probable). NAD is substrate of cytochrome P450 monooxygenase nodJ to produce the precursor of nodulisporic acid C (NAC), converted to NAC by one of the indole diterpene prenyltransferases nodD1 or nodD2 (Probable). The FAD-dependent monooxygenase nodY2 then oxidizes NAC to nodulisporic acid B (NAB) (Probable). Finally NAB is converted to NAA by one of the cytochrome P450 monooxygenases nodR, nodX or nodZ (Probable).</text>
</comment>
<comment type="cofactor">
    <cofactor evidence="1">
        <name>FAD</name>
        <dbReference type="ChEBI" id="CHEBI:57692"/>
    </cofactor>
</comment>
<comment type="pathway">
    <text evidence="7">Secondary metabolite biosynthesis.</text>
</comment>
<comment type="similarity">
    <text evidence="6">Belongs to the paxM FAD-dependent monooxygenase family.</text>
</comment>
<gene>
    <name evidence="5" type="primary">nodY2</name>
</gene>